<dbReference type="EMBL" id="AF082859">
    <property type="protein sequence ID" value="AAD38079.1"/>
    <property type="molecule type" value="mRNA"/>
</dbReference>
<dbReference type="EMBL" id="AK142955">
    <property type="protein sequence ID" value="BAE25229.1"/>
    <property type="molecule type" value="mRNA"/>
</dbReference>
<dbReference type="EMBL" id="CH466617">
    <property type="protein sequence ID" value="EDL05302.1"/>
    <property type="molecule type" value="Genomic_DNA"/>
</dbReference>
<dbReference type="EMBL" id="BC061138">
    <property type="protein sequence ID" value="AAH61138.1"/>
    <property type="molecule type" value="mRNA"/>
</dbReference>
<dbReference type="CCDS" id="CCDS19418.1"/>
<dbReference type="RefSeq" id="NP_035469.1">
    <property type="nucleotide sequence ID" value="NM_011339.2"/>
</dbReference>
<dbReference type="SMR" id="Q9WVL7"/>
<dbReference type="BioGRID" id="203134">
    <property type="interactions" value="1"/>
</dbReference>
<dbReference type="FunCoup" id="Q9WVL7">
    <property type="interactions" value="306"/>
</dbReference>
<dbReference type="STRING" id="10090.ENSMUSP00000031322"/>
<dbReference type="iPTMnet" id="Q9WVL7"/>
<dbReference type="PhosphoSitePlus" id="Q9WVL7"/>
<dbReference type="PaxDb" id="10090-ENSMUSP00000031322"/>
<dbReference type="PeptideAtlas" id="Q9WVL7"/>
<dbReference type="ProteomicsDB" id="279246"/>
<dbReference type="DNASU" id="20309"/>
<dbReference type="Ensembl" id="ENSMUST00000031322.7">
    <property type="protein sequence ID" value="ENSMUSP00000031322.7"/>
    <property type="gene ID" value="ENSMUSG00000029375.7"/>
</dbReference>
<dbReference type="GeneID" id="20309"/>
<dbReference type="KEGG" id="mmu:20309"/>
<dbReference type="UCSC" id="uc008ybk.1">
    <property type="organism name" value="mouse"/>
</dbReference>
<dbReference type="AGR" id="MGI:1339941"/>
<dbReference type="CTD" id="20309"/>
<dbReference type="MGI" id="MGI:1339941">
    <property type="gene designation" value="Cxcl15"/>
</dbReference>
<dbReference type="VEuPathDB" id="HostDB:ENSMUSG00000029375"/>
<dbReference type="eggNOG" id="ENOG502TDRK">
    <property type="taxonomic scope" value="Eukaryota"/>
</dbReference>
<dbReference type="GeneTree" id="ENSGT00940000168732"/>
<dbReference type="HOGENOM" id="CLU_1594012_0_0_1"/>
<dbReference type="InParanoid" id="Q9WVL7"/>
<dbReference type="OrthoDB" id="9937393at2759"/>
<dbReference type="PhylomeDB" id="Q9WVL7"/>
<dbReference type="TreeFam" id="TF333433"/>
<dbReference type="BioGRID-ORCS" id="20309">
    <property type="hits" value="2 hits in 78 CRISPR screens"/>
</dbReference>
<dbReference type="PRO" id="PR:Q9WVL7"/>
<dbReference type="Proteomes" id="UP000000589">
    <property type="component" value="Chromosome 5"/>
</dbReference>
<dbReference type="RNAct" id="Q9WVL7">
    <property type="molecule type" value="protein"/>
</dbReference>
<dbReference type="Bgee" id="ENSMUSG00000029375">
    <property type="expression patterns" value="Expressed in left lung lobe and 44 other cell types or tissues"/>
</dbReference>
<dbReference type="GO" id="GO:0005576">
    <property type="term" value="C:extracellular region"/>
    <property type="evidence" value="ECO:0000314"/>
    <property type="project" value="MGI"/>
</dbReference>
<dbReference type="GO" id="GO:0005615">
    <property type="term" value="C:extracellular space"/>
    <property type="evidence" value="ECO:0007669"/>
    <property type="project" value="UniProtKB-KW"/>
</dbReference>
<dbReference type="GO" id="GO:0008009">
    <property type="term" value="F:chemokine activity"/>
    <property type="evidence" value="ECO:0000314"/>
    <property type="project" value="MGI"/>
</dbReference>
<dbReference type="GO" id="GO:0006935">
    <property type="term" value="P:chemotaxis"/>
    <property type="evidence" value="ECO:0000314"/>
    <property type="project" value="MGI"/>
</dbReference>
<dbReference type="GO" id="GO:0030097">
    <property type="term" value="P:hemopoiesis"/>
    <property type="evidence" value="ECO:0000314"/>
    <property type="project" value="MGI"/>
</dbReference>
<dbReference type="GO" id="GO:0006955">
    <property type="term" value="P:immune response"/>
    <property type="evidence" value="ECO:0007669"/>
    <property type="project" value="InterPro"/>
</dbReference>
<dbReference type="GO" id="GO:0006954">
    <property type="term" value="P:inflammatory response"/>
    <property type="evidence" value="ECO:0000314"/>
    <property type="project" value="MGI"/>
</dbReference>
<dbReference type="GO" id="GO:0030593">
    <property type="term" value="P:neutrophil chemotaxis"/>
    <property type="evidence" value="ECO:0000314"/>
    <property type="project" value="MGI"/>
</dbReference>
<dbReference type="CDD" id="cd00273">
    <property type="entry name" value="Chemokine_CXC"/>
    <property type="match status" value="1"/>
</dbReference>
<dbReference type="FunFam" id="2.40.50.40:FF:000004">
    <property type="entry name" value="C-X-C motif chemokine"/>
    <property type="match status" value="1"/>
</dbReference>
<dbReference type="Gene3D" id="2.40.50.40">
    <property type="match status" value="1"/>
</dbReference>
<dbReference type="InterPro" id="IPR039809">
    <property type="entry name" value="Chemokine_b/g/d"/>
</dbReference>
<dbReference type="InterPro" id="IPR001089">
    <property type="entry name" value="Chemokine_CXC"/>
</dbReference>
<dbReference type="InterPro" id="IPR018048">
    <property type="entry name" value="Chemokine_CXC_CS"/>
</dbReference>
<dbReference type="InterPro" id="IPR001811">
    <property type="entry name" value="Chemokine_IL8-like_dom"/>
</dbReference>
<dbReference type="InterPro" id="IPR033899">
    <property type="entry name" value="CXC_Chemokine_domain"/>
</dbReference>
<dbReference type="InterPro" id="IPR036048">
    <property type="entry name" value="Interleukin_8-like_sf"/>
</dbReference>
<dbReference type="PANTHER" id="PTHR12015:SF199">
    <property type="entry name" value="C-X-C MOTIF CHEMOKINE 15"/>
    <property type="match status" value="1"/>
</dbReference>
<dbReference type="PANTHER" id="PTHR12015">
    <property type="entry name" value="SMALL INDUCIBLE CYTOKINE A"/>
    <property type="match status" value="1"/>
</dbReference>
<dbReference type="Pfam" id="PF00048">
    <property type="entry name" value="IL8"/>
    <property type="match status" value="1"/>
</dbReference>
<dbReference type="PRINTS" id="PR00437">
    <property type="entry name" value="SMALLCYTKCXC"/>
</dbReference>
<dbReference type="SMART" id="SM00199">
    <property type="entry name" value="SCY"/>
    <property type="match status" value="1"/>
</dbReference>
<dbReference type="SUPFAM" id="SSF54117">
    <property type="entry name" value="Interleukin 8-like chemokines"/>
    <property type="match status" value="1"/>
</dbReference>
<dbReference type="PROSITE" id="PS00471">
    <property type="entry name" value="SMALL_CYTOKINES_CXC"/>
    <property type="match status" value="1"/>
</dbReference>
<protein>
    <recommendedName>
        <fullName>C-X-C motif chemokine 15</fullName>
    </recommendedName>
    <alternativeName>
        <fullName>Lungkine</fullName>
    </alternativeName>
    <alternativeName>
        <fullName>Small-inducible cytokine B15</fullName>
    </alternativeName>
</protein>
<reference key="1">
    <citation type="journal article" date="1999" name="J. Immunol.">
        <title>Lungkine, a novel CXC chemokine, specifically expressed by lung bronchoepithelial cells.</title>
        <authorList>
            <person name="Rossi D.L."/>
            <person name="Hurst S.D."/>
            <person name="Xu Y."/>
            <person name="Wang W."/>
            <person name="Menon S."/>
            <person name="Coffman R.L."/>
            <person name="Zlotnik A."/>
        </authorList>
    </citation>
    <scope>NUCLEOTIDE SEQUENCE [MRNA]</scope>
    <scope>POSSIBLE FUNCTION</scope>
    <scope>SUBCELLULAR LOCATION</scope>
    <scope>TISSUE SPECIFICITY</scope>
    <scope>INDUCTION</scope>
    <source>
        <tissue>Lung</tissue>
    </source>
</reference>
<reference key="2">
    <citation type="journal article" date="2005" name="Science">
        <title>The transcriptional landscape of the mammalian genome.</title>
        <authorList>
            <person name="Carninci P."/>
            <person name="Kasukawa T."/>
            <person name="Katayama S."/>
            <person name="Gough J."/>
            <person name="Frith M.C."/>
            <person name="Maeda N."/>
            <person name="Oyama R."/>
            <person name="Ravasi T."/>
            <person name="Lenhard B."/>
            <person name="Wells C."/>
            <person name="Kodzius R."/>
            <person name="Shimokawa K."/>
            <person name="Bajic V.B."/>
            <person name="Brenner S.E."/>
            <person name="Batalov S."/>
            <person name="Forrest A.R."/>
            <person name="Zavolan M."/>
            <person name="Davis M.J."/>
            <person name="Wilming L.G."/>
            <person name="Aidinis V."/>
            <person name="Allen J.E."/>
            <person name="Ambesi-Impiombato A."/>
            <person name="Apweiler R."/>
            <person name="Aturaliya R.N."/>
            <person name="Bailey T.L."/>
            <person name="Bansal M."/>
            <person name="Baxter L."/>
            <person name="Beisel K.W."/>
            <person name="Bersano T."/>
            <person name="Bono H."/>
            <person name="Chalk A.M."/>
            <person name="Chiu K.P."/>
            <person name="Choudhary V."/>
            <person name="Christoffels A."/>
            <person name="Clutterbuck D.R."/>
            <person name="Crowe M.L."/>
            <person name="Dalla E."/>
            <person name="Dalrymple B.P."/>
            <person name="de Bono B."/>
            <person name="Della Gatta G."/>
            <person name="di Bernardo D."/>
            <person name="Down T."/>
            <person name="Engstrom P."/>
            <person name="Fagiolini M."/>
            <person name="Faulkner G."/>
            <person name="Fletcher C.F."/>
            <person name="Fukushima T."/>
            <person name="Furuno M."/>
            <person name="Futaki S."/>
            <person name="Gariboldi M."/>
            <person name="Georgii-Hemming P."/>
            <person name="Gingeras T.R."/>
            <person name="Gojobori T."/>
            <person name="Green R.E."/>
            <person name="Gustincich S."/>
            <person name="Harbers M."/>
            <person name="Hayashi Y."/>
            <person name="Hensch T.K."/>
            <person name="Hirokawa N."/>
            <person name="Hill D."/>
            <person name="Huminiecki L."/>
            <person name="Iacono M."/>
            <person name="Ikeo K."/>
            <person name="Iwama A."/>
            <person name="Ishikawa T."/>
            <person name="Jakt M."/>
            <person name="Kanapin A."/>
            <person name="Katoh M."/>
            <person name="Kawasawa Y."/>
            <person name="Kelso J."/>
            <person name="Kitamura H."/>
            <person name="Kitano H."/>
            <person name="Kollias G."/>
            <person name="Krishnan S.P."/>
            <person name="Kruger A."/>
            <person name="Kummerfeld S.K."/>
            <person name="Kurochkin I.V."/>
            <person name="Lareau L.F."/>
            <person name="Lazarevic D."/>
            <person name="Lipovich L."/>
            <person name="Liu J."/>
            <person name="Liuni S."/>
            <person name="McWilliam S."/>
            <person name="Madan Babu M."/>
            <person name="Madera M."/>
            <person name="Marchionni L."/>
            <person name="Matsuda H."/>
            <person name="Matsuzawa S."/>
            <person name="Miki H."/>
            <person name="Mignone F."/>
            <person name="Miyake S."/>
            <person name="Morris K."/>
            <person name="Mottagui-Tabar S."/>
            <person name="Mulder N."/>
            <person name="Nakano N."/>
            <person name="Nakauchi H."/>
            <person name="Ng P."/>
            <person name="Nilsson R."/>
            <person name="Nishiguchi S."/>
            <person name="Nishikawa S."/>
            <person name="Nori F."/>
            <person name="Ohara O."/>
            <person name="Okazaki Y."/>
            <person name="Orlando V."/>
            <person name="Pang K.C."/>
            <person name="Pavan W.J."/>
            <person name="Pavesi G."/>
            <person name="Pesole G."/>
            <person name="Petrovsky N."/>
            <person name="Piazza S."/>
            <person name="Reed J."/>
            <person name="Reid J.F."/>
            <person name="Ring B.Z."/>
            <person name="Ringwald M."/>
            <person name="Rost B."/>
            <person name="Ruan Y."/>
            <person name="Salzberg S.L."/>
            <person name="Sandelin A."/>
            <person name="Schneider C."/>
            <person name="Schoenbach C."/>
            <person name="Sekiguchi K."/>
            <person name="Semple C.A."/>
            <person name="Seno S."/>
            <person name="Sessa L."/>
            <person name="Sheng Y."/>
            <person name="Shibata Y."/>
            <person name="Shimada H."/>
            <person name="Shimada K."/>
            <person name="Silva D."/>
            <person name="Sinclair B."/>
            <person name="Sperling S."/>
            <person name="Stupka E."/>
            <person name="Sugiura K."/>
            <person name="Sultana R."/>
            <person name="Takenaka Y."/>
            <person name="Taki K."/>
            <person name="Tammoja K."/>
            <person name="Tan S.L."/>
            <person name="Tang S."/>
            <person name="Taylor M.S."/>
            <person name="Tegner J."/>
            <person name="Teichmann S.A."/>
            <person name="Ueda H.R."/>
            <person name="van Nimwegen E."/>
            <person name="Verardo R."/>
            <person name="Wei C.L."/>
            <person name="Yagi K."/>
            <person name="Yamanishi H."/>
            <person name="Zabarovsky E."/>
            <person name="Zhu S."/>
            <person name="Zimmer A."/>
            <person name="Hide W."/>
            <person name="Bult C."/>
            <person name="Grimmond S.M."/>
            <person name="Teasdale R.D."/>
            <person name="Liu E.T."/>
            <person name="Brusic V."/>
            <person name="Quackenbush J."/>
            <person name="Wahlestedt C."/>
            <person name="Mattick J.S."/>
            <person name="Hume D.A."/>
            <person name="Kai C."/>
            <person name="Sasaki D."/>
            <person name="Tomaru Y."/>
            <person name="Fukuda S."/>
            <person name="Kanamori-Katayama M."/>
            <person name="Suzuki M."/>
            <person name="Aoki J."/>
            <person name="Arakawa T."/>
            <person name="Iida J."/>
            <person name="Imamura K."/>
            <person name="Itoh M."/>
            <person name="Kato T."/>
            <person name="Kawaji H."/>
            <person name="Kawagashira N."/>
            <person name="Kawashima T."/>
            <person name="Kojima M."/>
            <person name="Kondo S."/>
            <person name="Konno H."/>
            <person name="Nakano K."/>
            <person name="Ninomiya N."/>
            <person name="Nishio T."/>
            <person name="Okada M."/>
            <person name="Plessy C."/>
            <person name="Shibata K."/>
            <person name="Shiraki T."/>
            <person name="Suzuki S."/>
            <person name="Tagami M."/>
            <person name="Waki K."/>
            <person name="Watahiki A."/>
            <person name="Okamura-Oho Y."/>
            <person name="Suzuki H."/>
            <person name="Kawai J."/>
            <person name="Hayashizaki Y."/>
        </authorList>
    </citation>
    <scope>NUCLEOTIDE SEQUENCE [LARGE SCALE MRNA]</scope>
    <source>
        <strain>C57BL/6J</strain>
        <tissue>Lung</tissue>
    </source>
</reference>
<reference key="3">
    <citation type="submission" date="2005-07" db="EMBL/GenBank/DDBJ databases">
        <authorList>
            <person name="Mural R.J."/>
            <person name="Adams M.D."/>
            <person name="Myers E.W."/>
            <person name="Smith H.O."/>
            <person name="Venter J.C."/>
        </authorList>
    </citation>
    <scope>NUCLEOTIDE SEQUENCE [LARGE SCALE GENOMIC DNA]</scope>
</reference>
<reference key="4">
    <citation type="journal article" date="2004" name="Genome Res.">
        <title>The status, quality, and expansion of the NIH full-length cDNA project: the Mammalian Gene Collection (MGC).</title>
        <authorList>
            <consortium name="The MGC Project Team"/>
        </authorList>
    </citation>
    <scope>NUCLEOTIDE SEQUENCE [LARGE SCALE MRNA]</scope>
    <source>
        <tissue>Heart</tissue>
        <tissue>Lung</tissue>
    </source>
</reference>
<reference key="5">
    <citation type="journal article" date="2001" name="J. Immunol.">
        <title>Impaired pulmonary host defense in mice lacking expression of the CXC chemokine lungkine.</title>
        <authorList>
            <person name="Chen S.C."/>
            <person name="Mehrad B."/>
            <person name="Deng J.C."/>
            <person name="Vassileva G."/>
            <person name="Manfra D.J."/>
            <person name="Cook D.N."/>
            <person name="Wiekowski M.T."/>
            <person name="Zlotnik A."/>
            <person name="Standiford T.J."/>
            <person name="Lira S.A."/>
        </authorList>
    </citation>
    <scope>FUNCTION</scope>
    <scope>TISSUE SPECIFICITY</scope>
    <scope>DISRUPTION PHENOTYPE</scope>
</reference>
<reference key="6">
    <citation type="journal article" date="2010" name="Cell">
        <title>A tissue-specific atlas of mouse protein phosphorylation and expression.</title>
        <authorList>
            <person name="Huttlin E.L."/>
            <person name="Jedrychowski M.P."/>
            <person name="Elias J.E."/>
            <person name="Goswami T."/>
            <person name="Rad R."/>
            <person name="Beausoleil S.A."/>
            <person name="Villen J."/>
            <person name="Haas W."/>
            <person name="Sowa M.E."/>
            <person name="Gygi S.P."/>
        </authorList>
    </citation>
    <scope>PHOSPHORYLATION [LARGE SCALE ANALYSIS] AT SER-157</scope>
    <scope>IDENTIFICATION BY MASS SPECTROMETRY [LARGE SCALE ANALYSIS]</scope>
    <source>
        <tissue>Lung</tissue>
    </source>
</reference>
<proteinExistence type="evidence at protein level"/>
<organism>
    <name type="scientific">Mus musculus</name>
    <name type="common">Mouse</name>
    <dbReference type="NCBI Taxonomy" id="10090"/>
    <lineage>
        <taxon>Eukaryota</taxon>
        <taxon>Metazoa</taxon>
        <taxon>Chordata</taxon>
        <taxon>Craniata</taxon>
        <taxon>Vertebrata</taxon>
        <taxon>Euteleostomi</taxon>
        <taxon>Mammalia</taxon>
        <taxon>Eutheria</taxon>
        <taxon>Euarchontoglires</taxon>
        <taxon>Glires</taxon>
        <taxon>Rodentia</taxon>
        <taxon>Myomorpha</taxon>
        <taxon>Muroidea</taxon>
        <taxon>Muridae</taxon>
        <taxon>Murinae</taxon>
        <taxon>Mus</taxon>
        <taxon>Mus</taxon>
    </lineage>
</organism>
<accession>Q9WVL7</accession>
<accession>Q3UQ15</accession>
<gene>
    <name type="primary">Cxcl15</name>
    <name type="synonym">Scyb15</name>
</gene>
<keyword id="KW-0145">Chemotaxis</keyword>
<keyword id="KW-0202">Cytokine</keyword>
<keyword id="KW-1015">Disulfide bond</keyword>
<keyword id="KW-0395">Inflammatory response</keyword>
<keyword id="KW-0597">Phosphoprotein</keyword>
<keyword id="KW-1185">Reference proteome</keyword>
<keyword id="KW-0964">Secreted</keyword>
<keyword id="KW-0732">Signal</keyword>
<feature type="signal peptide" evidence="2">
    <location>
        <begin position="1"/>
        <end position="25"/>
    </location>
</feature>
<feature type="chain" id="PRO_0000005117" description="C-X-C motif chemokine 15">
    <location>
        <begin position="26"/>
        <end position="167"/>
    </location>
</feature>
<feature type="modified residue" description="Phosphoserine" evidence="6">
    <location>
        <position position="157"/>
    </location>
</feature>
<feature type="disulfide bond" evidence="1">
    <location>
        <begin position="30"/>
        <end position="57"/>
    </location>
</feature>
<feature type="disulfide bond" evidence="1">
    <location>
        <begin position="32"/>
        <end position="73"/>
    </location>
</feature>
<name>CXL15_MOUSE</name>
<evidence type="ECO:0000250" key="1"/>
<evidence type="ECO:0000255" key="2"/>
<evidence type="ECO:0000269" key="3">
    <source>
    </source>
</evidence>
<evidence type="ECO:0000269" key="4">
    <source>
    </source>
</evidence>
<evidence type="ECO:0000305" key="5"/>
<evidence type="ECO:0007744" key="6">
    <source>
    </source>
</evidence>
<sequence length="167" mass="19091">MAAQGWSMLLLAVLNLGIFVRPCDTQELRCLCIQEHSEFIPLKLIKNIMVIFETIYCNRKEVIAVPKNGSMICLDPDAPWVKATVGPITNRFLPEDLKQKEFPPAMKLLYSVEHEKPLYLSFGRPENKRIFPFPIRETSRHFADLAHNSDRNFLRDSSEVSLTGSDA</sequence>
<comment type="function">
    <text evidence="4">Chemotactic for neutrophils. Involved in lung-specific neutrophil trafficking during normal and inflammatory conditions.</text>
</comment>
<comment type="subcellular location">
    <subcellularLocation>
        <location evidence="3">Secreted</location>
    </subcellularLocation>
</comment>
<comment type="tissue specificity">
    <text evidence="3 4">Expression restricted to the lung, produced by bronchoepithelial cells and is released into the airways. Expressed at low levels in fetal lung.</text>
</comment>
<comment type="induction">
    <text evidence="3">By inflammation; in lung.</text>
</comment>
<comment type="disruption phenotype">
    <text evidence="4">Mice develop normally and are fertile. They display normal leukocyte subpopulations in peripheral blood and bone marrow, but the amount of neutrophils is reduced in the airspace. Susceptibility to pneumonia induced by K.pneumoniae is increased with decreased survival and increased bacterial burden in lung.</text>
</comment>
<comment type="similarity">
    <text evidence="5">Belongs to the intercrine alpha (chemokine CxC) family.</text>
</comment>